<feature type="chain" id="PRO_0000395484" description="Probable glutathione S-transferase DHAR4">
    <location>
        <begin position="1"/>
        <end position="217"/>
    </location>
</feature>
<feature type="domain" description="GST N-terminal">
    <location>
        <begin position="10"/>
        <end position="85"/>
    </location>
</feature>
<feature type="domain" description="GST C-terminal">
    <location>
        <begin position="86"/>
        <end position="217"/>
    </location>
</feature>
<feature type="short sequence motif" description="Glutathione-binding" evidence="3">
    <location>
        <begin position="20"/>
        <end position="25"/>
    </location>
</feature>
<feature type="active site" description="Nucleophile" evidence="1">
    <location>
        <position position="20"/>
    </location>
</feature>
<feature type="binding site" evidence="1">
    <location>
        <position position="8"/>
    </location>
    <ligand>
        <name>glutathione</name>
        <dbReference type="ChEBI" id="CHEBI:57925"/>
    </ligand>
</feature>
<feature type="binding site" evidence="1">
    <location>
        <position position="8"/>
    </location>
    <ligand>
        <name>L-ascorbate</name>
        <dbReference type="ChEBI" id="CHEBI:38290"/>
    </ligand>
</feature>
<feature type="binding site" evidence="1">
    <location>
        <position position="19"/>
    </location>
    <ligand>
        <name>glutathione</name>
        <dbReference type="ChEBI" id="CHEBI:57925"/>
    </ligand>
</feature>
<feature type="binding site" evidence="1">
    <location>
        <position position="19"/>
    </location>
    <ligand>
        <name>L-ascorbate</name>
        <dbReference type="ChEBI" id="CHEBI:38290"/>
    </ligand>
</feature>
<feature type="binding site" evidence="2">
    <location>
        <position position="47"/>
    </location>
    <ligand>
        <name>glutathione</name>
        <dbReference type="ChEBI" id="CHEBI:57925"/>
    </ligand>
</feature>
<feature type="binding site" evidence="2">
    <location>
        <position position="75"/>
    </location>
    <ligand>
        <name>glutathione</name>
        <dbReference type="ChEBI" id="CHEBI:57925"/>
    </ligand>
</feature>
<feature type="binding site" evidence="1">
    <location>
        <position position="164"/>
    </location>
    <ligand>
        <name>glutathione</name>
        <dbReference type="ChEBI" id="CHEBI:57925"/>
    </ligand>
</feature>
<feature type="binding site" evidence="1">
    <location>
        <position position="211"/>
    </location>
    <ligand>
        <name>glutathione</name>
        <dbReference type="ChEBI" id="CHEBI:57925"/>
    </ligand>
</feature>
<feature type="binding site" evidence="1">
    <location>
        <position position="214"/>
    </location>
    <ligand>
        <name>L-ascorbate</name>
        <dbReference type="ChEBI" id="CHEBI:38290"/>
    </ligand>
</feature>
<gene>
    <name type="primary">DHAR4</name>
    <name type="ordered locus">At5g36270</name>
    <name type="ORF">T30G6.13</name>
</gene>
<comment type="function">
    <text evidence="2">Exhibits glutathione-dependent thiol transferase and dehydroascorbate (DHA) reductase activities.</text>
</comment>
<comment type="catalytic activity">
    <reaction evidence="4">
        <text>RX + glutathione = an S-substituted glutathione + a halide anion + H(+)</text>
        <dbReference type="Rhea" id="RHEA:16437"/>
        <dbReference type="ChEBI" id="CHEBI:15378"/>
        <dbReference type="ChEBI" id="CHEBI:16042"/>
        <dbReference type="ChEBI" id="CHEBI:17792"/>
        <dbReference type="ChEBI" id="CHEBI:57925"/>
        <dbReference type="ChEBI" id="CHEBI:90779"/>
        <dbReference type="EC" id="2.5.1.18"/>
    </reaction>
</comment>
<comment type="catalytic activity">
    <reaction evidence="4">
        <text>L-dehydroascorbate + 2 glutathione = glutathione disulfide + L-ascorbate</text>
        <dbReference type="Rhea" id="RHEA:24424"/>
        <dbReference type="ChEBI" id="CHEBI:38290"/>
        <dbReference type="ChEBI" id="CHEBI:57925"/>
        <dbReference type="ChEBI" id="CHEBI:58297"/>
        <dbReference type="ChEBI" id="CHEBI:58539"/>
        <dbReference type="EC" id="1.8.5.1"/>
    </reaction>
</comment>
<comment type="subunit">
    <text evidence="2">Monomer.</text>
</comment>
<comment type="subcellular location">
    <subcellularLocation>
        <location evidence="4">Cytoplasm</location>
        <location evidence="4">Cytosol</location>
    </subcellularLocation>
</comment>
<comment type="similarity">
    <text evidence="4">Belongs to the GST superfamily. DHAR family.</text>
</comment>
<sequence length="217" mass="24060">MGIEVCVKAASGAPDVLGDCPFGQRILLTLEDKKLPYKTHLIDVSLKPDWFLAISPKGKLPLVKFDEDENWVADSDLIVGIIEEKYPEPSLVTFPPEFASVGSKIIGAFVMFLTSKDHANDGSDMALLDELEALDHHLKTHVGPFVAGDKVTVVDLSLAPKLYHLETTLGHFMDWCVPESLTNVRDYMKVLFSLESFEKTKAAKEYLIASWAPKLDV</sequence>
<name>DHAR4_ARATH</name>
<keyword id="KW-0963">Cytoplasm</keyword>
<keyword id="KW-0216">Detoxification</keyword>
<keyword id="KW-0560">Oxidoreductase</keyword>
<keyword id="KW-1185">Reference proteome</keyword>
<keyword id="KW-0808">Transferase</keyword>
<evidence type="ECO:0000250" key="1">
    <source>
        <dbReference type="UniProtKB" id="Q65XA0"/>
    </source>
</evidence>
<evidence type="ECO:0000250" key="2">
    <source>
        <dbReference type="UniProtKB" id="Q9FWR4"/>
    </source>
</evidence>
<evidence type="ECO:0000255" key="3"/>
<evidence type="ECO:0000305" key="4"/>
<proteinExistence type="inferred from homology"/>
<accession>Q9FG59</accession>
<organism>
    <name type="scientific">Arabidopsis thaliana</name>
    <name type="common">Mouse-ear cress</name>
    <dbReference type="NCBI Taxonomy" id="3702"/>
    <lineage>
        <taxon>Eukaryota</taxon>
        <taxon>Viridiplantae</taxon>
        <taxon>Streptophyta</taxon>
        <taxon>Embryophyta</taxon>
        <taxon>Tracheophyta</taxon>
        <taxon>Spermatophyta</taxon>
        <taxon>Magnoliopsida</taxon>
        <taxon>eudicotyledons</taxon>
        <taxon>Gunneridae</taxon>
        <taxon>Pentapetalae</taxon>
        <taxon>rosids</taxon>
        <taxon>malvids</taxon>
        <taxon>Brassicales</taxon>
        <taxon>Brassicaceae</taxon>
        <taxon>Camelineae</taxon>
        <taxon>Arabidopsis</taxon>
    </lineage>
</organism>
<dbReference type="EC" id="2.5.1.18" evidence="4"/>
<dbReference type="EC" id="1.8.5.1" evidence="4"/>
<dbReference type="EMBL" id="AB026661">
    <property type="protein sequence ID" value="BAB09367.1"/>
    <property type="molecule type" value="Genomic_DNA"/>
</dbReference>
<dbReference type="EMBL" id="CP002688">
    <property type="status" value="NOT_ANNOTATED_CDS"/>
    <property type="molecule type" value="Genomic_DNA"/>
</dbReference>
<dbReference type="SMR" id="Q9FG59"/>
<dbReference type="FunCoup" id="Q9FG59">
    <property type="interactions" value="84"/>
</dbReference>
<dbReference type="STRING" id="3702.Q9FG59"/>
<dbReference type="PeptideAtlas" id="Q9FG59"/>
<dbReference type="Araport" id="AT5G36270"/>
<dbReference type="TAIR" id="AT5G36270"/>
<dbReference type="InParanoid" id="Q9FG59"/>
<dbReference type="PRO" id="PR:Q9FG59"/>
<dbReference type="Proteomes" id="UP000006548">
    <property type="component" value="Chromosome 5"/>
</dbReference>
<dbReference type="ExpressionAtlas" id="Q9FG59">
    <property type="expression patterns" value="baseline and differential"/>
</dbReference>
<dbReference type="GO" id="GO:0005829">
    <property type="term" value="C:cytosol"/>
    <property type="evidence" value="ECO:0007669"/>
    <property type="project" value="UniProtKB-SubCell"/>
</dbReference>
<dbReference type="GO" id="GO:0045174">
    <property type="term" value="F:glutathione dehydrogenase (ascorbate) activity"/>
    <property type="evidence" value="ECO:0000318"/>
    <property type="project" value="GO_Central"/>
</dbReference>
<dbReference type="GO" id="GO:0004364">
    <property type="term" value="F:glutathione transferase activity"/>
    <property type="evidence" value="ECO:0007669"/>
    <property type="project" value="UniProtKB-EC"/>
</dbReference>
<dbReference type="GO" id="GO:0033355">
    <property type="term" value="P:ascorbate glutathione cycle"/>
    <property type="evidence" value="ECO:0000318"/>
    <property type="project" value="GO_Central"/>
</dbReference>
<dbReference type="GO" id="GO:0080151">
    <property type="term" value="P:positive regulation of salicylic acid mediated signaling pathway"/>
    <property type="evidence" value="ECO:0000318"/>
    <property type="project" value="GO_Central"/>
</dbReference>
<dbReference type="CDD" id="cd03201">
    <property type="entry name" value="GST_C_DHAR"/>
    <property type="match status" value="1"/>
</dbReference>
<dbReference type="CDD" id="cd00570">
    <property type="entry name" value="GST_N_family"/>
    <property type="match status" value="1"/>
</dbReference>
<dbReference type="FunFam" id="1.20.1050.10:FF:000029">
    <property type="entry name" value="Glutathione S-transferase DHAR3, chloroplastic"/>
    <property type="match status" value="1"/>
</dbReference>
<dbReference type="Gene3D" id="1.20.1050.10">
    <property type="match status" value="1"/>
</dbReference>
<dbReference type="Gene3D" id="3.40.30.10">
    <property type="entry name" value="Glutaredoxin"/>
    <property type="match status" value="1"/>
</dbReference>
<dbReference type="InterPro" id="IPR044627">
    <property type="entry name" value="DHAR1/2/3/4"/>
</dbReference>
<dbReference type="InterPro" id="IPR010987">
    <property type="entry name" value="Glutathione-S-Trfase_C-like"/>
</dbReference>
<dbReference type="InterPro" id="IPR036282">
    <property type="entry name" value="Glutathione-S-Trfase_C_sf"/>
</dbReference>
<dbReference type="InterPro" id="IPR040079">
    <property type="entry name" value="Glutathione_S-Trfase"/>
</dbReference>
<dbReference type="InterPro" id="IPR004045">
    <property type="entry name" value="Glutathione_S-Trfase_N"/>
</dbReference>
<dbReference type="InterPro" id="IPR036249">
    <property type="entry name" value="Thioredoxin-like_sf"/>
</dbReference>
<dbReference type="PANTHER" id="PTHR44420">
    <property type="entry name" value="GLUTATHIONE S-TRANSFERASE DHAR2-RELATED"/>
    <property type="match status" value="1"/>
</dbReference>
<dbReference type="PANTHER" id="PTHR44420:SF2">
    <property type="entry name" value="GLUTATHIONE S-TRANSFERASE DHAR2-RELATED"/>
    <property type="match status" value="1"/>
</dbReference>
<dbReference type="Pfam" id="PF13410">
    <property type="entry name" value="GST_C_2"/>
    <property type="match status" value="1"/>
</dbReference>
<dbReference type="Pfam" id="PF13409">
    <property type="entry name" value="GST_N_2"/>
    <property type="match status" value="1"/>
</dbReference>
<dbReference type="SFLD" id="SFLDS00019">
    <property type="entry name" value="Glutathione_Transferase_(cytos"/>
    <property type="match status" value="1"/>
</dbReference>
<dbReference type="SUPFAM" id="SSF47616">
    <property type="entry name" value="GST C-terminal domain-like"/>
    <property type="match status" value="1"/>
</dbReference>
<dbReference type="SUPFAM" id="SSF52833">
    <property type="entry name" value="Thioredoxin-like"/>
    <property type="match status" value="1"/>
</dbReference>
<dbReference type="PROSITE" id="PS50405">
    <property type="entry name" value="GST_CTER"/>
    <property type="match status" value="1"/>
</dbReference>
<dbReference type="PROSITE" id="PS50404">
    <property type="entry name" value="GST_NTER"/>
    <property type="match status" value="1"/>
</dbReference>
<protein>
    <recommendedName>
        <fullName>Probable glutathione S-transferase DHAR4</fullName>
        <ecNumber evidence="4">2.5.1.18</ecNumber>
    </recommendedName>
    <alternativeName>
        <fullName>Chloride intracellular channel homolog 4</fullName>
        <shortName>CLIC homolog 4</shortName>
    </alternativeName>
    <alternativeName>
        <fullName evidence="4">Glutathione-dependent dehydroascorbate reductase 4</fullName>
        <shortName evidence="4">AtDHAR4</shortName>
        <shortName>GSH-dependent dehydroascorbate reductase 4</shortName>
        <ecNumber evidence="4">1.8.5.1</ecNumber>
    </alternativeName>
</protein>
<reference key="1">
    <citation type="submission" date="1999-04" db="EMBL/GenBank/DDBJ databases">
        <title>Structural analysis of Arabidopsis thaliana chromosome 5. XI.</title>
        <authorList>
            <person name="Kaneko T."/>
            <person name="Katoh T."/>
            <person name="Asamizu E."/>
            <person name="Sato S."/>
            <person name="Nakamura Y."/>
            <person name="Kotani H."/>
            <person name="Tabata S."/>
        </authorList>
    </citation>
    <scope>NUCLEOTIDE SEQUENCE [LARGE SCALE GENOMIC DNA]</scope>
    <source>
        <strain>cv. Columbia</strain>
    </source>
</reference>
<reference key="2">
    <citation type="journal article" date="2017" name="Plant J.">
        <title>Araport11: a complete reannotation of the Arabidopsis thaliana reference genome.</title>
        <authorList>
            <person name="Cheng C.Y."/>
            <person name="Krishnakumar V."/>
            <person name="Chan A.P."/>
            <person name="Thibaud-Nissen F."/>
            <person name="Schobel S."/>
            <person name="Town C.D."/>
        </authorList>
    </citation>
    <scope>GENOME REANNOTATION</scope>
    <source>
        <strain>cv. Columbia</strain>
    </source>
</reference>
<reference key="3">
    <citation type="journal article" date="2002" name="J. Biol. Chem.">
        <title>Functional divergence in the glutathione transferase superfamily in plants. Identification of two classes with putative functions in redox homeostasis in Arabidopsis thaliana.</title>
        <authorList>
            <person name="Dixon D.P."/>
            <person name="Davis B.G."/>
            <person name="Edwards R."/>
        </authorList>
    </citation>
    <scope>GENE FAMILY</scope>
</reference>